<organism>
    <name type="scientific">Pectobacterium atrosepticum (strain SCRI 1043 / ATCC BAA-672)</name>
    <name type="common">Erwinia carotovora subsp. atroseptica</name>
    <dbReference type="NCBI Taxonomy" id="218491"/>
    <lineage>
        <taxon>Bacteria</taxon>
        <taxon>Pseudomonadati</taxon>
        <taxon>Pseudomonadota</taxon>
        <taxon>Gammaproteobacteria</taxon>
        <taxon>Enterobacterales</taxon>
        <taxon>Pectobacteriaceae</taxon>
        <taxon>Pectobacterium</taxon>
    </lineage>
</organism>
<name>NAGK_PECAS</name>
<feature type="chain" id="PRO_0000270105" description="N-acetyl-D-glucosamine kinase">
    <location>
        <begin position="1"/>
        <end position="304"/>
    </location>
</feature>
<feature type="binding site" evidence="1">
    <location>
        <begin position="4"/>
        <end position="11"/>
    </location>
    <ligand>
        <name>ATP</name>
        <dbReference type="ChEBI" id="CHEBI:30616"/>
    </ligand>
</feature>
<feature type="binding site" evidence="1">
    <location>
        <begin position="133"/>
        <end position="140"/>
    </location>
    <ligand>
        <name>ATP</name>
        <dbReference type="ChEBI" id="CHEBI:30616"/>
    </ligand>
</feature>
<feature type="binding site" evidence="1">
    <location>
        <position position="157"/>
    </location>
    <ligand>
        <name>Zn(2+)</name>
        <dbReference type="ChEBI" id="CHEBI:29105"/>
    </ligand>
</feature>
<feature type="binding site" evidence="1">
    <location>
        <position position="177"/>
    </location>
    <ligand>
        <name>Zn(2+)</name>
        <dbReference type="ChEBI" id="CHEBI:29105"/>
    </ligand>
</feature>
<feature type="binding site" evidence="1">
    <location>
        <position position="179"/>
    </location>
    <ligand>
        <name>Zn(2+)</name>
        <dbReference type="ChEBI" id="CHEBI:29105"/>
    </ligand>
</feature>
<feature type="binding site" evidence="1">
    <location>
        <position position="184"/>
    </location>
    <ligand>
        <name>Zn(2+)</name>
        <dbReference type="ChEBI" id="CHEBI:29105"/>
    </ligand>
</feature>
<gene>
    <name evidence="1" type="primary">nagK</name>
    <name type="ordered locus">ECA1826</name>
</gene>
<sequence>MYYGFDMGGTKIELGVFDAELNKVWQKRVPTPRNNYDDLLAMLIDLVHEADAQVGVQGSVGIGVPGIQTGDEGALFTANLPATMGKPLRIDLSQRLQRDVRISNDANCFVLSEAWDAEFRSYPVVLGLILGTGLGGGLVINGRPVDGRNGIAGEFGHLRLPSDALDIIGVDIPRVKCGCGQFGCIENYISGRGFEWLYEHLYGEALPAVTIIRHYRGGEEKALEFVDRFMDLLAACLGNLLTLFDPHLLVLGGGLSNFDEIYQILPTRLPSRLLPIAKLPRIEKARHGDAGGVRGAALLHLMDN</sequence>
<comment type="function">
    <text evidence="1">Catalyzes the phosphorylation of N-acetyl-D-glucosamine (GlcNAc) derived from cell-wall degradation, yielding GlcNAc-6-P.</text>
</comment>
<comment type="catalytic activity">
    <reaction evidence="1">
        <text>N-acetyl-D-glucosamine + ATP = N-acetyl-D-glucosamine 6-phosphate + ADP + H(+)</text>
        <dbReference type="Rhea" id="RHEA:17417"/>
        <dbReference type="ChEBI" id="CHEBI:15378"/>
        <dbReference type="ChEBI" id="CHEBI:30616"/>
        <dbReference type="ChEBI" id="CHEBI:57513"/>
        <dbReference type="ChEBI" id="CHEBI:456216"/>
        <dbReference type="ChEBI" id="CHEBI:506227"/>
        <dbReference type="EC" id="2.7.1.59"/>
    </reaction>
</comment>
<comment type="pathway">
    <text evidence="1">Cell wall biogenesis; peptidoglycan recycling.</text>
</comment>
<comment type="similarity">
    <text evidence="1">Belongs to the ROK (NagC/XylR) family. NagK subfamily.</text>
</comment>
<keyword id="KW-0067">ATP-binding</keyword>
<keyword id="KW-0119">Carbohydrate metabolism</keyword>
<keyword id="KW-0418">Kinase</keyword>
<keyword id="KW-0479">Metal-binding</keyword>
<keyword id="KW-0547">Nucleotide-binding</keyword>
<keyword id="KW-1185">Reference proteome</keyword>
<keyword id="KW-0808">Transferase</keyword>
<keyword id="KW-0862">Zinc</keyword>
<dbReference type="EC" id="2.7.1.59" evidence="1"/>
<dbReference type="EMBL" id="BX950851">
    <property type="protein sequence ID" value="CAG74729.1"/>
    <property type="molecule type" value="Genomic_DNA"/>
</dbReference>
<dbReference type="RefSeq" id="WP_011093397.1">
    <property type="nucleotide sequence ID" value="NC_004547.2"/>
</dbReference>
<dbReference type="SMR" id="Q6D662"/>
<dbReference type="STRING" id="218491.ECA1826"/>
<dbReference type="GeneID" id="57209465"/>
<dbReference type="KEGG" id="eca:ECA1826"/>
<dbReference type="PATRIC" id="fig|218491.5.peg.1855"/>
<dbReference type="eggNOG" id="COG1940">
    <property type="taxonomic scope" value="Bacteria"/>
</dbReference>
<dbReference type="HOGENOM" id="CLU_036604_0_3_6"/>
<dbReference type="OrthoDB" id="9810372at2"/>
<dbReference type="UniPathway" id="UPA00544"/>
<dbReference type="Proteomes" id="UP000007966">
    <property type="component" value="Chromosome"/>
</dbReference>
<dbReference type="GO" id="GO:0005524">
    <property type="term" value="F:ATP binding"/>
    <property type="evidence" value="ECO:0007669"/>
    <property type="project" value="UniProtKB-UniRule"/>
</dbReference>
<dbReference type="GO" id="GO:0045127">
    <property type="term" value="F:N-acetylglucosamine kinase activity"/>
    <property type="evidence" value="ECO:0007669"/>
    <property type="project" value="UniProtKB-UniRule"/>
</dbReference>
<dbReference type="GO" id="GO:0008270">
    <property type="term" value="F:zinc ion binding"/>
    <property type="evidence" value="ECO:0007669"/>
    <property type="project" value="UniProtKB-UniRule"/>
</dbReference>
<dbReference type="GO" id="GO:0006044">
    <property type="term" value="P:N-acetylglucosamine metabolic process"/>
    <property type="evidence" value="ECO:0007669"/>
    <property type="project" value="UniProtKB-UniRule"/>
</dbReference>
<dbReference type="GO" id="GO:0009254">
    <property type="term" value="P:peptidoglycan turnover"/>
    <property type="evidence" value="ECO:0007669"/>
    <property type="project" value="UniProtKB-UniRule"/>
</dbReference>
<dbReference type="CDD" id="cd24057">
    <property type="entry name" value="ASKHA_NBD_ROK_NAGK"/>
    <property type="match status" value="1"/>
</dbReference>
<dbReference type="FunFam" id="3.30.420.40:FF:000049">
    <property type="entry name" value="N-acetyl-D-glucosamine kinase"/>
    <property type="match status" value="1"/>
</dbReference>
<dbReference type="Gene3D" id="3.30.420.40">
    <property type="match status" value="2"/>
</dbReference>
<dbReference type="HAMAP" id="MF_01271">
    <property type="entry name" value="GlcNAc_kinase"/>
    <property type="match status" value="1"/>
</dbReference>
<dbReference type="InterPro" id="IPR043129">
    <property type="entry name" value="ATPase_NBD"/>
</dbReference>
<dbReference type="InterPro" id="IPR023505">
    <property type="entry name" value="N-acetyl-D-glucosamine_kinase"/>
</dbReference>
<dbReference type="InterPro" id="IPR000600">
    <property type="entry name" value="ROK"/>
</dbReference>
<dbReference type="InterPro" id="IPR049874">
    <property type="entry name" value="ROK_cs"/>
</dbReference>
<dbReference type="NCBIfam" id="NF009835">
    <property type="entry name" value="PRK13310.1"/>
    <property type="match status" value="1"/>
</dbReference>
<dbReference type="PANTHER" id="PTHR18964:SF162">
    <property type="entry name" value="N-ACETYL-D-GLUCOSAMINE KINASE"/>
    <property type="match status" value="1"/>
</dbReference>
<dbReference type="PANTHER" id="PTHR18964">
    <property type="entry name" value="ROK (REPRESSOR, ORF, KINASE) FAMILY"/>
    <property type="match status" value="1"/>
</dbReference>
<dbReference type="Pfam" id="PF00480">
    <property type="entry name" value="ROK"/>
    <property type="match status" value="1"/>
</dbReference>
<dbReference type="SUPFAM" id="SSF53067">
    <property type="entry name" value="Actin-like ATPase domain"/>
    <property type="match status" value="1"/>
</dbReference>
<dbReference type="PROSITE" id="PS01125">
    <property type="entry name" value="ROK"/>
    <property type="match status" value="1"/>
</dbReference>
<reference key="1">
    <citation type="journal article" date="2004" name="Proc. Natl. Acad. Sci. U.S.A.">
        <title>Genome sequence of the enterobacterial phytopathogen Erwinia carotovora subsp. atroseptica and characterization of virulence factors.</title>
        <authorList>
            <person name="Bell K.S."/>
            <person name="Sebaihia M."/>
            <person name="Pritchard L."/>
            <person name="Holden M.T.G."/>
            <person name="Hyman L.J."/>
            <person name="Holeva M.C."/>
            <person name="Thomson N.R."/>
            <person name="Bentley S.D."/>
            <person name="Churcher L.J.C."/>
            <person name="Mungall K."/>
            <person name="Atkin R."/>
            <person name="Bason N."/>
            <person name="Brooks K."/>
            <person name="Chillingworth T."/>
            <person name="Clark K."/>
            <person name="Doggett J."/>
            <person name="Fraser A."/>
            <person name="Hance Z."/>
            <person name="Hauser H."/>
            <person name="Jagels K."/>
            <person name="Moule S."/>
            <person name="Norbertczak H."/>
            <person name="Ormond D."/>
            <person name="Price C."/>
            <person name="Quail M.A."/>
            <person name="Sanders M."/>
            <person name="Walker D."/>
            <person name="Whitehead S."/>
            <person name="Salmond G.P.C."/>
            <person name="Birch P.R.J."/>
            <person name="Parkhill J."/>
            <person name="Toth I.K."/>
        </authorList>
    </citation>
    <scope>NUCLEOTIDE SEQUENCE [LARGE SCALE GENOMIC DNA]</scope>
    <source>
        <strain>SCRI 1043 / ATCC BAA-672</strain>
    </source>
</reference>
<protein>
    <recommendedName>
        <fullName evidence="1">N-acetyl-D-glucosamine kinase</fullName>
        <ecNumber evidence="1">2.7.1.59</ecNumber>
    </recommendedName>
    <alternativeName>
        <fullName evidence="1">GlcNAc kinase</fullName>
    </alternativeName>
</protein>
<accession>Q6D662</accession>
<proteinExistence type="inferred from homology"/>
<evidence type="ECO:0000255" key="1">
    <source>
        <dbReference type="HAMAP-Rule" id="MF_01271"/>
    </source>
</evidence>